<keyword id="KW-1003">Cell membrane</keyword>
<keyword id="KW-0407">Ion channel</keyword>
<keyword id="KW-0406">Ion transport</keyword>
<keyword id="KW-0472">Membrane</keyword>
<keyword id="KW-0479">Metal-binding</keyword>
<keyword id="KW-0915">Sodium</keyword>
<keyword id="KW-0812">Transmembrane</keyword>
<keyword id="KW-1133">Transmembrane helix</keyword>
<keyword id="KW-0813">Transport</keyword>
<organism>
    <name type="scientific">Rhodococcus jostii (strain RHA1)</name>
    <dbReference type="NCBI Taxonomy" id="101510"/>
    <lineage>
        <taxon>Bacteria</taxon>
        <taxon>Bacillati</taxon>
        <taxon>Actinomycetota</taxon>
        <taxon>Actinomycetes</taxon>
        <taxon>Mycobacteriales</taxon>
        <taxon>Nocardiaceae</taxon>
        <taxon>Rhodococcus</taxon>
    </lineage>
</organism>
<reference key="1">
    <citation type="journal article" date="2006" name="Proc. Natl. Acad. Sci. U.S.A.">
        <title>The complete genome of Rhodococcus sp. RHA1 provides insights into a catabolic powerhouse.</title>
        <authorList>
            <person name="McLeod M.P."/>
            <person name="Warren R.L."/>
            <person name="Hsiao W.W.L."/>
            <person name="Araki N."/>
            <person name="Myhre M."/>
            <person name="Fernandes C."/>
            <person name="Miyazawa D."/>
            <person name="Wong W."/>
            <person name="Lillquist A.L."/>
            <person name="Wang D."/>
            <person name="Dosanjh M."/>
            <person name="Hara H."/>
            <person name="Petrescu A."/>
            <person name="Morin R.D."/>
            <person name="Yang G."/>
            <person name="Stott J.M."/>
            <person name="Schein J.E."/>
            <person name="Shin H."/>
            <person name="Smailus D."/>
            <person name="Siddiqui A.S."/>
            <person name="Marra M.A."/>
            <person name="Jones S.J.M."/>
            <person name="Holt R."/>
            <person name="Brinkman F.S.L."/>
            <person name="Miyauchi K."/>
            <person name="Fukuda M."/>
            <person name="Davies J.E."/>
            <person name="Mohn W.W."/>
            <person name="Eltis L.D."/>
        </authorList>
    </citation>
    <scope>NUCLEOTIDE SEQUENCE [LARGE SCALE GENOMIC DNA]</scope>
    <source>
        <strain>RHA1</strain>
    </source>
</reference>
<protein>
    <recommendedName>
        <fullName evidence="1">Fluoride-specific ion channel FluC 1</fullName>
    </recommendedName>
</protein>
<evidence type="ECO:0000255" key="1">
    <source>
        <dbReference type="HAMAP-Rule" id="MF_00454"/>
    </source>
</evidence>
<dbReference type="EMBL" id="CP000431">
    <property type="protein sequence ID" value="ABG98187.1"/>
    <property type="molecule type" value="Genomic_DNA"/>
</dbReference>
<dbReference type="RefSeq" id="WP_011598316.1">
    <property type="nucleotide sequence ID" value="NC_008268.1"/>
</dbReference>
<dbReference type="SMR" id="Q0S2P9"/>
<dbReference type="KEGG" id="rha:RHA1_ro06411"/>
<dbReference type="PATRIC" id="fig|101510.16.peg.6464"/>
<dbReference type="eggNOG" id="COG0239">
    <property type="taxonomic scope" value="Bacteria"/>
</dbReference>
<dbReference type="HOGENOM" id="CLU_114342_1_1_11"/>
<dbReference type="OrthoDB" id="4483775at2"/>
<dbReference type="Proteomes" id="UP000008710">
    <property type="component" value="Chromosome"/>
</dbReference>
<dbReference type="GO" id="GO:0005886">
    <property type="term" value="C:plasma membrane"/>
    <property type="evidence" value="ECO:0007669"/>
    <property type="project" value="UniProtKB-SubCell"/>
</dbReference>
<dbReference type="GO" id="GO:0062054">
    <property type="term" value="F:fluoride channel activity"/>
    <property type="evidence" value="ECO:0007669"/>
    <property type="project" value="UniProtKB-UniRule"/>
</dbReference>
<dbReference type="GO" id="GO:0046872">
    <property type="term" value="F:metal ion binding"/>
    <property type="evidence" value="ECO:0007669"/>
    <property type="project" value="UniProtKB-KW"/>
</dbReference>
<dbReference type="GO" id="GO:0140114">
    <property type="term" value="P:cellular detoxification of fluoride"/>
    <property type="evidence" value="ECO:0007669"/>
    <property type="project" value="UniProtKB-UniRule"/>
</dbReference>
<dbReference type="HAMAP" id="MF_00454">
    <property type="entry name" value="FluC"/>
    <property type="match status" value="1"/>
</dbReference>
<dbReference type="InterPro" id="IPR003691">
    <property type="entry name" value="FluC"/>
</dbReference>
<dbReference type="Pfam" id="PF02537">
    <property type="entry name" value="CRCB"/>
    <property type="match status" value="1"/>
</dbReference>
<proteinExistence type="inferred from homology"/>
<name>FLUC1_RHOJR</name>
<accession>Q0S2P9</accession>
<gene>
    <name evidence="1" type="primary">fluC1</name>
    <name evidence="1" type="synonym">crcB1</name>
    <name type="ordered locus">RHA1_ro06411</name>
</gene>
<sequence>MCAVSLTKPVAVVALGGALGASARFLLAELWPGIWTVLLINVVGSLLLGYLAETVGPDRLSRLFLGVGVLGGFTTFSTFAVDAVREDAVTATLYVVATLIPALLAARLGMLAGHRHRLARKAVA</sequence>
<feature type="chain" id="PRO_0000252925" description="Fluoride-specific ion channel FluC 1">
    <location>
        <begin position="1"/>
        <end position="124"/>
    </location>
</feature>
<feature type="transmembrane region" description="Helical" evidence="1">
    <location>
        <begin position="1"/>
        <end position="21"/>
    </location>
</feature>
<feature type="transmembrane region" description="Helical" evidence="1">
    <location>
        <begin position="30"/>
        <end position="50"/>
    </location>
</feature>
<feature type="transmembrane region" description="Helical" evidence="1">
    <location>
        <begin position="64"/>
        <end position="84"/>
    </location>
</feature>
<feature type="transmembrane region" description="Helical" evidence="1">
    <location>
        <begin position="93"/>
        <end position="113"/>
    </location>
</feature>
<feature type="binding site" evidence="1">
    <location>
        <position position="71"/>
    </location>
    <ligand>
        <name>Na(+)</name>
        <dbReference type="ChEBI" id="CHEBI:29101"/>
        <note>structural</note>
    </ligand>
</feature>
<feature type="binding site" evidence="1">
    <location>
        <position position="74"/>
    </location>
    <ligand>
        <name>Na(+)</name>
        <dbReference type="ChEBI" id="CHEBI:29101"/>
        <note>structural</note>
    </ligand>
</feature>
<comment type="function">
    <text evidence="1">Fluoride-specific ion channel. Important for reducing fluoride concentration in the cell, thus reducing its toxicity.</text>
</comment>
<comment type="catalytic activity">
    <reaction evidence="1">
        <text>fluoride(in) = fluoride(out)</text>
        <dbReference type="Rhea" id="RHEA:76159"/>
        <dbReference type="ChEBI" id="CHEBI:17051"/>
    </reaction>
    <physiologicalReaction direction="left-to-right" evidence="1">
        <dbReference type="Rhea" id="RHEA:76160"/>
    </physiologicalReaction>
</comment>
<comment type="activity regulation">
    <text evidence="1">Na(+) is not transported, but it plays an essential structural role and its presence is essential for fluoride channel function.</text>
</comment>
<comment type="subcellular location">
    <subcellularLocation>
        <location evidence="1">Cell membrane</location>
        <topology evidence="1">Multi-pass membrane protein</topology>
    </subcellularLocation>
</comment>
<comment type="similarity">
    <text evidence="1">Belongs to the fluoride channel Fluc/FEX (TC 1.A.43) family.</text>
</comment>